<name>EF1A1_TRYB2</name>
<accession>P86934</accession>
<accession>P41166</accession>
<accession>Q38C32</accession>
<sequence length="449" mass="49106">MGKEKVHMNLVVVGHVDAGKSTATGHLIYKCGGIDKRTIEKFEKEAADIGKASFKYAWVLDKLKAERERGITIDIALWKFESPKSVFTIIDAPGHRDFIKNMITGTSQADAAILIIASAQGEFEAGISKDGQTREHALLAFTLGVKQMVVCCNKMDDKTVNYGQERYDEIVKEVSAYIKKVGYNVEKVRFVPISGWQGDNMIEKSEKMPWYKGPTLLEALDMLEPPVRPSDKPLRLPLQDVYKIGGIGTVPVGRVETGVMKPGDVVTFAPANVTTEVKSIEMHHEQLAEATPGDNVGFNVKNVSVKDIRRGNVCGNTKNDPPKEAADFTAQVIILNHPGQIGNGYAPVLDCHTSHIACKFAEIESKIDRRSGKELEKAPKSIKSGDAAIVRMVPQKPMCVEVFNDYAPLGRFAVRDMRQTVAVGIIKAVTKKDGSGGKVTKAAVKASKK</sequence>
<gene>
    <name type="primary">TEF1</name>
    <name type="ORF">Tb10.70.5650</name>
</gene>
<comment type="function">
    <text evidence="1">This protein promotes the GTP-dependent binding of aminoacyl-tRNA to the A-site of ribosomes during protein biosynthesis.</text>
</comment>
<comment type="subcellular location">
    <subcellularLocation>
        <location evidence="1">Cytoplasm</location>
    </subcellularLocation>
</comment>
<comment type="PTM">
    <text evidence="2">Phosphatidylethanolamine (PE) is a direct precursor of the ethanolamine-phosphoglycerol (EPG) moiety.</text>
</comment>
<comment type="miscellaneous">
    <text evidence="1">The Kennedy pathway is the major route for phosphatidylethanolamine (PE) synthesis, as shown by reduced levels after using RNAi against the first two enzymes of the Kennedy pathway.</text>
</comment>
<comment type="similarity">
    <text evidence="3">Belongs to the TRAFAC class translation factor GTPase superfamily. Classic translation factor GTPase family. EF-Tu/EF-1A subfamily.</text>
</comment>
<feature type="chain" id="PRO_0000412120" description="Elongation factor 1-alpha 1">
    <location>
        <begin position="1"/>
        <end position="449"/>
    </location>
</feature>
<feature type="domain" description="tr-type G">
    <location>
        <begin position="5"/>
        <end position="230"/>
    </location>
</feature>
<feature type="region of interest" description="G1" evidence="1">
    <location>
        <begin position="14"/>
        <end position="21"/>
    </location>
</feature>
<feature type="region of interest" description="G2" evidence="1">
    <location>
        <begin position="70"/>
        <end position="74"/>
    </location>
</feature>
<feature type="region of interest" description="G3" evidence="1">
    <location>
        <begin position="91"/>
        <end position="94"/>
    </location>
</feature>
<feature type="region of interest" description="G4" evidence="1">
    <location>
        <begin position="153"/>
        <end position="156"/>
    </location>
</feature>
<feature type="region of interest" description="G5" evidence="1">
    <location>
        <begin position="194"/>
        <end position="196"/>
    </location>
</feature>
<feature type="binding site" evidence="1">
    <location>
        <begin position="14"/>
        <end position="21"/>
    </location>
    <ligand>
        <name>GTP</name>
        <dbReference type="ChEBI" id="CHEBI:37565"/>
    </ligand>
</feature>
<feature type="binding site" evidence="1">
    <location>
        <begin position="91"/>
        <end position="95"/>
    </location>
    <ligand>
        <name>GTP</name>
        <dbReference type="ChEBI" id="CHEBI:37565"/>
    </ligand>
</feature>
<feature type="binding site" evidence="1">
    <location>
        <begin position="153"/>
        <end position="156"/>
    </location>
    <ligand>
        <name>GTP</name>
        <dbReference type="ChEBI" id="CHEBI:37565"/>
    </ligand>
</feature>
<feature type="modified residue" description="5-glutamyl glycerylphosphorylethanolamine" evidence="2">
    <location>
        <position position="362"/>
    </location>
</feature>
<protein>
    <recommendedName>
        <fullName>Elongation factor 1-alpha 1</fullName>
        <shortName>EF-1-alpha 1</shortName>
    </recommendedName>
</protein>
<evidence type="ECO:0000250" key="1"/>
<evidence type="ECO:0000269" key="2">
    <source>
    </source>
</evidence>
<evidence type="ECO:0000305" key="3"/>
<evidence type="ECO:0000312" key="4">
    <source>
        <dbReference type="Proteomes" id="UP000008524"/>
    </source>
</evidence>
<reference key="1">
    <citation type="journal article" date="2005" name="Science">
        <title>The genome of the African trypanosome Trypanosoma brucei.</title>
        <authorList>
            <person name="Berriman M."/>
            <person name="Ghedin E."/>
            <person name="Hertz-Fowler C."/>
            <person name="Blandin G."/>
            <person name="Renauld H."/>
            <person name="Bartholomeu D.C."/>
            <person name="Lennard N.J."/>
            <person name="Caler E."/>
            <person name="Hamlin N.E."/>
            <person name="Haas B."/>
            <person name="Bohme U."/>
            <person name="Hannick L."/>
            <person name="Aslett M.A."/>
            <person name="Shallom J."/>
            <person name="Marcello L."/>
            <person name="Hou L."/>
            <person name="Wickstead B."/>
            <person name="Alsmark U.C.M."/>
            <person name="Arrowsmith C."/>
            <person name="Atkin R.J."/>
            <person name="Barron A.J."/>
            <person name="Bringaud F."/>
            <person name="Brooks K."/>
            <person name="Carrington M."/>
            <person name="Cherevach I."/>
            <person name="Chillingworth T.J."/>
            <person name="Churcher C."/>
            <person name="Clark L.N."/>
            <person name="Corton C.H."/>
            <person name="Cronin A."/>
            <person name="Davies R.M."/>
            <person name="Doggett J."/>
            <person name="Djikeng A."/>
            <person name="Feldblyum T."/>
            <person name="Field M.C."/>
            <person name="Fraser A."/>
            <person name="Goodhead I."/>
            <person name="Hance Z."/>
            <person name="Harper D."/>
            <person name="Harris B.R."/>
            <person name="Hauser H."/>
            <person name="Hostetler J."/>
            <person name="Ivens A."/>
            <person name="Jagels K."/>
            <person name="Johnson D."/>
            <person name="Johnson J."/>
            <person name="Jones K."/>
            <person name="Kerhornou A.X."/>
            <person name="Koo H."/>
            <person name="Larke N."/>
            <person name="Landfear S."/>
            <person name="Larkin C."/>
            <person name="Leech V."/>
            <person name="Line A."/>
            <person name="Lord A."/>
            <person name="Macleod A."/>
            <person name="Mooney P.J."/>
            <person name="Moule S."/>
            <person name="Martin D.M."/>
            <person name="Morgan G.W."/>
            <person name="Mungall K."/>
            <person name="Norbertczak H."/>
            <person name="Ormond D."/>
            <person name="Pai G."/>
            <person name="Peacock C.S."/>
            <person name="Peterson J."/>
            <person name="Quail M.A."/>
            <person name="Rabbinowitsch E."/>
            <person name="Rajandream M.A."/>
            <person name="Reitter C."/>
            <person name="Salzberg S.L."/>
            <person name="Sanders M."/>
            <person name="Schobel S."/>
            <person name="Sharp S."/>
            <person name="Simmonds M."/>
            <person name="Simpson A.J."/>
            <person name="Tallon L."/>
            <person name="Turner C.M."/>
            <person name="Tait A."/>
            <person name="Tivey A.R."/>
            <person name="Van Aken S."/>
            <person name="Walker D."/>
            <person name="Wanless D."/>
            <person name="Wang S."/>
            <person name="White B."/>
            <person name="White O."/>
            <person name="Whitehead S."/>
            <person name="Woodward J."/>
            <person name="Wortman J."/>
            <person name="Adams M.D."/>
            <person name="Embley T.M."/>
            <person name="Gull K."/>
            <person name="Ullu E."/>
            <person name="Barry J.D."/>
            <person name="Fairlamb A.H."/>
            <person name="Opperdoes F."/>
            <person name="Barrell B.G."/>
            <person name="Donelson J.E."/>
            <person name="Hall N."/>
            <person name="Fraser C.M."/>
            <person name="Melville S.E."/>
            <person name="El-Sayed N.M.A."/>
        </authorList>
    </citation>
    <scope>NUCLEOTIDE SEQUENCE [LARGE SCALE GENOMIC DNA]</scope>
    <source>
        <strain evidence="4">927/4 GUTat10.1</strain>
    </source>
</reference>
<reference key="2">
    <citation type="journal article" date="1993" name="Proc. Natl. Acad. Sci. U.S.A.">
        <title>Animals and fungi are each other's closest relatives: congruent evidence from multiple proteins.</title>
        <authorList>
            <person name="Baldauf S.L."/>
            <person name="Palmer J.D."/>
        </authorList>
    </citation>
    <scope>NUCLEOTIDE SEQUENCE OF 18-415</scope>
</reference>
<reference key="3">
    <citation type="journal article" date="2008" name="J. Biol. Chem.">
        <title>Phosphatidylethanolamine is the precursor of the ethanolamine phosphoglycerol moiety bound to eukaryotic elongation factor 1A.</title>
        <authorList>
            <person name="Signorell A."/>
            <person name="Jelk J."/>
            <person name="Rauch M."/>
            <person name="Buetikofer P."/>
        </authorList>
    </citation>
    <scope>PROTEIN SEQUENCE OF 279-301 AND 360-366</scope>
    <scope>IDENTIFICATION BY MASS SPECTROMETRY</scope>
    <scope>ETHANOLAMINYLATION AT GLU-362</scope>
</reference>
<organism>
    <name type="scientific">Trypanosoma brucei brucei (strain 927/4 GUTat10.1)</name>
    <dbReference type="NCBI Taxonomy" id="185431"/>
    <lineage>
        <taxon>Eukaryota</taxon>
        <taxon>Discoba</taxon>
        <taxon>Euglenozoa</taxon>
        <taxon>Kinetoplastea</taxon>
        <taxon>Metakinetoplastina</taxon>
        <taxon>Trypanosomatida</taxon>
        <taxon>Trypanosomatidae</taxon>
        <taxon>Trypanosoma</taxon>
    </lineage>
</organism>
<dbReference type="EMBL" id="CM000208">
    <property type="protein sequence ID" value="EAN77638.1"/>
    <property type="molecule type" value="Genomic_DNA"/>
</dbReference>
<dbReference type="EMBL" id="L25868">
    <property type="protein sequence ID" value="AAA16602.1"/>
    <property type="molecule type" value="Unassigned_DNA"/>
</dbReference>
<dbReference type="RefSeq" id="XP_822465.1">
    <property type="nucleotide sequence ID" value="XM_817372.1"/>
</dbReference>
<dbReference type="RefSeq" id="XP_822466.1">
    <property type="nucleotide sequence ID" value="XM_817373.1"/>
</dbReference>
<dbReference type="SMR" id="P86934"/>
<dbReference type="FunCoup" id="P86934">
    <property type="interactions" value="296"/>
</dbReference>
<dbReference type="STRING" id="185431.P86934"/>
<dbReference type="PaxDb" id="5691-EAN77637"/>
<dbReference type="GeneID" id="3662245"/>
<dbReference type="KEGG" id="tbr:Tb10.70.5650"/>
<dbReference type="KEGG" id="tbr:Tb10.70.5670"/>
<dbReference type="VEuPathDB" id="TriTrypDB:Tb11.v5.1046"/>
<dbReference type="VEuPathDB" id="TriTrypDB:Tb927.10.2090"/>
<dbReference type="VEuPathDB" id="TriTrypDB:Tb927.10.2100"/>
<dbReference type="VEuPathDB" id="TriTrypDB:Tb927.10.2110"/>
<dbReference type="eggNOG" id="KOG0052">
    <property type="taxonomic scope" value="Eukaryota"/>
</dbReference>
<dbReference type="InParanoid" id="P86934"/>
<dbReference type="OMA" id="SPPCYTP"/>
<dbReference type="OrthoDB" id="239390at2759"/>
<dbReference type="Proteomes" id="UP000008524">
    <property type="component" value="Chromosome 10"/>
</dbReference>
<dbReference type="GO" id="GO:0005737">
    <property type="term" value="C:cytoplasm"/>
    <property type="evidence" value="ECO:0000314"/>
    <property type="project" value="GeneDB"/>
</dbReference>
<dbReference type="GO" id="GO:0005516">
    <property type="term" value="F:calmodulin binding"/>
    <property type="evidence" value="ECO:0000247"/>
    <property type="project" value="GeneDB"/>
</dbReference>
<dbReference type="GO" id="GO:0005525">
    <property type="term" value="F:GTP binding"/>
    <property type="evidence" value="ECO:0007669"/>
    <property type="project" value="UniProtKB-KW"/>
</dbReference>
<dbReference type="GO" id="GO:0003924">
    <property type="term" value="F:GTPase activity"/>
    <property type="evidence" value="ECO:0000318"/>
    <property type="project" value="GO_Central"/>
</dbReference>
<dbReference type="GO" id="GO:0003729">
    <property type="term" value="F:mRNA binding"/>
    <property type="evidence" value="ECO:0000314"/>
    <property type="project" value="GeneDB"/>
</dbReference>
<dbReference type="GO" id="GO:0003746">
    <property type="term" value="F:translation elongation factor activity"/>
    <property type="evidence" value="ECO:0000318"/>
    <property type="project" value="GO_Central"/>
</dbReference>
<dbReference type="GO" id="GO:0019722">
    <property type="term" value="P:calcium-mediated signaling"/>
    <property type="evidence" value="ECO:0000304"/>
    <property type="project" value="GeneDB"/>
</dbReference>
<dbReference type="GO" id="GO:0007017">
    <property type="term" value="P:microtubule-based process"/>
    <property type="evidence" value="ECO:0000304"/>
    <property type="project" value="GeneDB"/>
</dbReference>
<dbReference type="GO" id="GO:0006412">
    <property type="term" value="P:translation"/>
    <property type="evidence" value="ECO:0000318"/>
    <property type="project" value="GO_Central"/>
</dbReference>
<dbReference type="GO" id="GO:0006414">
    <property type="term" value="P:translational elongation"/>
    <property type="evidence" value="ECO:0000318"/>
    <property type="project" value="GO_Central"/>
</dbReference>
<dbReference type="CDD" id="cd01883">
    <property type="entry name" value="EF1_alpha"/>
    <property type="match status" value="1"/>
</dbReference>
<dbReference type="CDD" id="cd03693">
    <property type="entry name" value="EF1_alpha_II"/>
    <property type="match status" value="1"/>
</dbReference>
<dbReference type="CDD" id="cd03705">
    <property type="entry name" value="EF1_alpha_III"/>
    <property type="match status" value="1"/>
</dbReference>
<dbReference type="FunFam" id="2.40.30.10:FF:000003">
    <property type="entry name" value="Elongation factor 1-alpha"/>
    <property type="match status" value="1"/>
</dbReference>
<dbReference type="FunFam" id="2.40.30.10:FF:000005">
    <property type="entry name" value="Elongation factor 1-alpha"/>
    <property type="match status" value="1"/>
</dbReference>
<dbReference type="FunFam" id="3.40.50.300:FF:000255">
    <property type="entry name" value="Elongation factor 1-alpha"/>
    <property type="match status" value="1"/>
</dbReference>
<dbReference type="Gene3D" id="3.40.50.300">
    <property type="entry name" value="P-loop containing nucleotide triphosphate hydrolases"/>
    <property type="match status" value="1"/>
</dbReference>
<dbReference type="Gene3D" id="2.40.30.10">
    <property type="entry name" value="Translation factors"/>
    <property type="match status" value="2"/>
</dbReference>
<dbReference type="HAMAP" id="MF_00118_A">
    <property type="entry name" value="EF_Tu_A"/>
    <property type="match status" value="1"/>
</dbReference>
<dbReference type="InterPro" id="IPR004161">
    <property type="entry name" value="EFTu-like_2"/>
</dbReference>
<dbReference type="InterPro" id="IPR031157">
    <property type="entry name" value="G_TR_CS"/>
</dbReference>
<dbReference type="InterPro" id="IPR054696">
    <property type="entry name" value="GTP-eEF1A_C"/>
</dbReference>
<dbReference type="InterPro" id="IPR027417">
    <property type="entry name" value="P-loop_NTPase"/>
</dbReference>
<dbReference type="InterPro" id="IPR000795">
    <property type="entry name" value="T_Tr_GTP-bd_dom"/>
</dbReference>
<dbReference type="InterPro" id="IPR050100">
    <property type="entry name" value="TRAFAC_GTPase_members"/>
</dbReference>
<dbReference type="InterPro" id="IPR009000">
    <property type="entry name" value="Transl_B-barrel_sf"/>
</dbReference>
<dbReference type="InterPro" id="IPR009001">
    <property type="entry name" value="Transl_elong_EF1A/Init_IF2_C"/>
</dbReference>
<dbReference type="InterPro" id="IPR004539">
    <property type="entry name" value="Transl_elong_EF1A_euk/arc"/>
</dbReference>
<dbReference type="NCBIfam" id="TIGR00483">
    <property type="entry name" value="EF-1_alpha"/>
    <property type="match status" value="1"/>
</dbReference>
<dbReference type="NCBIfam" id="NF008969">
    <property type="entry name" value="PRK12317.1"/>
    <property type="match status" value="1"/>
</dbReference>
<dbReference type="PANTHER" id="PTHR23115">
    <property type="entry name" value="TRANSLATION FACTOR"/>
    <property type="match status" value="1"/>
</dbReference>
<dbReference type="Pfam" id="PF22594">
    <property type="entry name" value="GTP-eEF1A_C"/>
    <property type="match status" value="1"/>
</dbReference>
<dbReference type="Pfam" id="PF00009">
    <property type="entry name" value="GTP_EFTU"/>
    <property type="match status" value="1"/>
</dbReference>
<dbReference type="Pfam" id="PF03144">
    <property type="entry name" value="GTP_EFTU_D2"/>
    <property type="match status" value="1"/>
</dbReference>
<dbReference type="PRINTS" id="PR00315">
    <property type="entry name" value="ELONGATNFCT"/>
</dbReference>
<dbReference type="SUPFAM" id="SSF50465">
    <property type="entry name" value="EF-Tu/eEF-1alpha/eIF2-gamma C-terminal domain"/>
    <property type="match status" value="1"/>
</dbReference>
<dbReference type="SUPFAM" id="SSF52540">
    <property type="entry name" value="P-loop containing nucleoside triphosphate hydrolases"/>
    <property type="match status" value="1"/>
</dbReference>
<dbReference type="SUPFAM" id="SSF50447">
    <property type="entry name" value="Translation proteins"/>
    <property type="match status" value="1"/>
</dbReference>
<dbReference type="PROSITE" id="PS00301">
    <property type="entry name" value="G_TR_1"/>
    <property type="match status" value="1"/>
</dbReference>
<dbReference type="PROSITE" id="PS51722">
    <property type="entry name" value="G_TR_2"/>
    <property type="match status" value="1"/>
</dbReference>
<keyword id="KW-0963">Cytoplasm</keyword>
<keyword id="KW-0903">Direct protein sequencing</keyword>
<keyword id="KW-0251">Elongation factor</keyword>
<keyword id="KW-0342">GTP-binding</keyword>
<keyword id="KW-0547">Nucleotide-binding</keyword>
<keyword id="KW-0597">Phosphoprotein</keyword>
<keyword id="KW-0648">Protein biosynthesis</keyword>
<keyword id="KW-1185">Reference proteome</keyword>
<proteinExistence type="evidence at protein level"/>